<name>GATA_BURP6</name>
<sequence length="496" mass="52137">MHAKSLTELRAALDAKECSAVELAQHYLKRIDAARDLNAFVHVDAELTLAQAKAADAALANGEAGPLAGLPIAHKDVFVTRGWRSTAGSKMLANYASPFDATVVARLSAAGMVTLGKTNMDEFAMGSSNENSAFGPVKNPWDTSAVPGGSSGGSSAAVAAGLAPAATGTDTGGSIRQPASFAGVTGIKPTYGRVSRYGMIAFASSLDQGGPMARSAADCALLLNAMAGFDERDSTSLERADEDYTRHLGKAWAAGGDAGKPLAGLRIGLPAEYFGAGLADDVRAAIDAALKTYEALGATLVPVSLPKTELSIPVYYVIAPAEASSNLSRFDGVRYGHRAAEYRDLLDMYKKSRAEGFGPEVKRRILVGTYVLSHGYYDAYYLQAQKIRRIIAQDFQEAFKSCDVIMGPASPTVAWDIGAKGDDPVQMYLADIYTLSVSLAGLPGMSVPCGFGAGANAKRPVGLQIIGNYFDEARMLQVADAFQRATDWHVQEPAGV</sequence>
<proteinExistence type="inferred from homology"/>
<reference key="1">
    <citation type="journal article" date="2010" name="Genome Biol. Evol.">
        <title>Continuing evolution of Burkholderia mallei through genome reduction and large-scale rearrangements.</title>
        <authorList>
            <person name="Losada L."/>
            <person name="Ronning C.M."/>
            <person name="DeShazer D."/>
            <person name="Woods D."/>
            <person name="Fedorova N."/>
            <person name="Kim H.S."/>
            <person name="Shabalina S.A."/>
            <person name="Pearson T.R."/>
            <person name="Brinkac L."/>
            <person name="Tan P."/>
            <person name="Nandi T."/>
            <person name="Crabtree J."/>
            <person name="Badger J."/>
            <person name="Beckstrom-Sternberg S."/>
            <person name="Saqib M."/>
            <person name="Schutzer S.E."/>
            <person name="Keim P."/>
            <person name="Nierman W.C."/>
        </authorList>
    </citation>
    <scope>NUCLEOTIDE SEQUENCE [LARGE SCALE GENOMIC DNA]</scope>
    <source>
        <strain>668</strain>
    </source>
</reference>
<feature type="chain" id="PRO_1000015812" description="Glutamyl-tRNA(Gln) amidotransferase subunit A">
    <location>
        <begin position="1"/>
        <end position="496"/>
    </location>
</feature>
<feature type="active site" description="Charge relay system" evidence="1">
    <location>
        <position position="75"/>
    </location>
</feature>
<feature type="active site" description="Charge relay system" evidence="1">
    <location>
        <position position="150"/>
    </location>
</feature>
<feature type="active site" description="Acyl-ester intermediate" evidence="1">
    <location>
        <position position="174"/>
    </location>
</feature>
<comment type="function">
    <text evidence="1">Allows the formation of correctly charged Gln-tRNA(Gln) through the transamidation of misacylated Glu-tRNA(Gln) in organisms which lack glutaminyl-tRNA synthetase. The reaction takes place in the presence of glutamine and ATP through an activated gamma-phospho-Glu-tRNA(Gln).</text>
</comment>
<comment type="catalytic activity">
    <reaction evidence="1">
        <text>L-glutamyl-tRNA(Gln) + L-glutamine + ATP + H2O = L-glutaminyl-tRNA(Gln) + L-glutamate + ADP + phosphate + H(+)</text>
        <dbReference type="Rhea" id="RHEA:17521"/>
        <dbReference type="Rhea" id="RHEA-COMP:9681"/>
        <dbReference type="Rhea" id="RHEA-COMP:9684"/>
        <dbReference type="ChEBI" id="CHEBI:15377"/>
        <dbReference type="ChEBI" id="CHEBI:15378"/>
        <dbReference type="ChEBI" id="CHEBI:29985"/>
        <dbReference type="ChEBI" id="CHEBI:30616"/>
        <dbReference type="ChEBI" id="CHEBI:43474"/>
        <dbReference type="ChEBI" id="CHEBI:58359"/>
        <dbReference type="ChEBI" id="CHEBI:78520"/>
        <dbReference type="ChEBI" id="CHEBI:78521"/>
        <dbReference type="ChEBI" id="CHEBI:456216"/>
        <dbReference type="EC" id="6.3.5.7"/>
    </reaction>
</comment>
<comment type="subunit">
    <text evidence="1">Heterotrimer of A, B and C subunits.</text>
</comment>
<comment type="similarity">
    <text evidence="1">Belongs to the amidase family. GatA subfamily.</text>
</comment>
<organism>
    <name type="scientific">Burkholderia pseudomallei (strain 668)</name>
    <dbReference type="NCBI Taxonomy" id="320373"/>
    <lineage>
        <taxon>Bacteria</taxon>
        <taxon>Pseudomonadati</taxon>
        <taxon>Pseudomonadota</taxon>
        <taxon>Betaproteobacteria</taxon>
        <taxon>Burkholderiales</taxon>
        <taxon>Burkholderiaceae</taxon>
        <taxon>Burkholderia</taxon>
        <taxon>pseudomallei group</taxon>
    </lineage>
</organism>
<protein>
    <recommendedName>
        <fullName evidence="1">Glutamyl-tRNA(Gln) amidotransferase subunit A</fullName>
        <shortName evidence="1">Glu-ADT subunit A</shortName>
        <ecNumber evidence="1">6.3.5.7</ecNumber>
    </recommendedName>
</protein>
<accession>A3N4F4</accession>
<keyword id="KW-0067">ATP-binding</keyword>
<keyword id="KW-0436">Ligase</keyword>
<keyword id="KW-0547">Nucleotide-binding</keyword>
<keyword id="KW-0648">Protein biosynthesis</keyword>
<dbReference type="EC" id="6.3.5.7" evidence="1"/>
<dbReference type="EMBL" id="CP000570">
    <property type="protein sequence ID" value="ABN82125.1"/>
    <property type="molecule type" value="Genomic_DNA"/>
</dbReference>
<dbReference type="RefSeq" id="WP_011850907.1">
    <property type="nucleotide sequence ID" value="NC_009074.1"/>
</dbReference>
<dbReference type="SMR" id="A3N4F4"/>
<dbReference type="KEGG" id="bpd:BURPS668_0172"/>
<dbReference type="HOGENOM" id="CLU_009600_0_3_4"/>
<dbReference type="GO" id="GO:0030956">
    <property type="term" value="C:glutamyl-tRNA(Gln) amidotransferase complex"/>
    <property type="evidence" value="ECO:0007669"/>
    <property type="project" value="InterPro"/>
</dbReference>
<dbReference type="GO" id="GO:0005524">
    <property type="term" value="F:ATP binding"/>
    <property type="evidence" value="ECO:0007669"/>
    <property type="project" value="UniProtKB-KW"/>
</dbReference>
<dbReference type="GO" id="GO:0050567">
    <property type="term" value="F:glutaminyl-tRNA synthase (glutamine-hydrolyzing) activity"/>
    <property type="evidence" value="ECO:0007669"/>
    <property type="project" value="UniProtKB-UniRule"/>
</dbReference>
<dbReference type="GO" id="GO:0006412">
    <property type="term" value="P:translation"/>
    <property type="evidence" value="ECO:0007669"/>
    <property type="project" value="UniProtKB-UniRule"/>
</dbReference>
<dbReference type="Gene3D" id="3.90.1300.10">
    <property type="entry name" value="Amidase signature (AS) domain"/>
    <property type="match status" value="1"/>
</dbReference>
<dbReference type="HAMAP" id="MF_00120">
    <property type="entry name" value="GatA"/>
    <property type="match status" value="1"/>
</dbReference>
<dbReference type="InterPro" id="IPR000120">
    <property type="entry name" value="Amidase"/>
</dbReference>
<dbReference type="InterPro" id="IPR020556">
    <property type="entry name" value="Amidase_CS"/>
</dbReference>
<dbReference type="InterPro" id="IPR023631">
    <property type="entry name" value="Amidase_dom"/>
</dbReference>
<dbReference type="InterPro" id="IPR036928">
    <property type="entry name" value="AS_sf"/>
</dbReference>
<dbReference type="InterPro" id="IPR004412">
    <property type="entry name" value="GatA"/>
</dbReference>
<dbReference type="NCBIfam" id="TIGR00132">
    <property type="entry name" value="gatA"/>
    <property type="match status" value="1"/>
</dbReference>
<dbReference type="PANTHER" id="PTHR11895:SF151">
    <property type="entry name" value="GLUTAMYL-TRNA(GLN) AMIDOTRANSFERASE SUBUNIT A"/>
    <property type="match status" value="1"/>
</dbReference>
<dbReference type="PANTHER" id="PTHR11895">
    <property type="entry name" value="TRANSAMIDASE"/>
    <property type="match status" value="1"/>
</dbReference>
<dbReference type="Pfam" id="PF01425">
    <property type="entry name" value="Amidase"/>
    <property type="match status" value="1"/>
</dbReference>
<dbReference type="SUPFAM" id="SSF75304">
    <property type="entry name" value="Amidase signature (AS) enzymes"/>
    <property type="match status" value="1"/>
</dbReference>
<dbReference type="PROSITE" id="PS00571">
    <property type="entry name" value="AMIDASES"/>
    <property type="match status" value="1"/>
</dbReference>
<gene>
    <name evidence="1" type="primary">gatA</name>
    <name type="ordered locus">BURPS668_0172</name>
</gene>
<evidence type="ECO:0000255" key="1">
    <source>
        <dbReference type="HAMAP-Rule" id="MF_00120"/>
    </source>
</evidence>